<keyword id="KW-1015">Disulfide bond</keyword>
<keyword id="KW-0372">Hormone</keyword>
<keyword id="KW-1185">Reference proteome</keyword>
<keyword id="KW-0964">Secreted</keyword>
<keyword id="KW-0732">Signal</keyword>
<evidence type="ECO:0000250" key="1"/>
<evidence type="ECO:0000305" key="2"/>
<sequence length="210" mass="23457">MARRSQGTKLHLAVLCLVVSCHAIGLSDLMERASQRSDKLHSLSTSLNKDLDSHFPPMGRVMMPRPSMCHTSSLQIPKDKEQALRVSENELISLARSLLLAWNDPLLLLSSEAPTLPHPSNGDISSKIRELQDYSKSLGDGLDILVNKMGPSSQYISLIPFKGGDLGNDKTSRLINFHFLMSCFRRDSHKIDSFLKVLRCRATKMRPETC</sequence>
<organism>
    <name type="scientific">Oncorhynchus tshawytscha</name>
    <name type="common">Chinook salmon</name>
    <name type="synonym">Salmo tshawytscha</name>
    <dbReference type="NCBI Taxonomy" id="74940"/>
    <lineage>
        <taxon>Eukaryota</taxon>
        <taxon>Metazoa</taxon>
        <taxon>Chordata</taxon>
        <taxon>Craniata</taxon>
        <taxon>Vertebrata</taxon>
        <taxon>Euteleostomi</taxon>
        <taxon>Actinopterygii</taxon>
        <taxon>Neopterygii</taxon>
        <taxon>Teleostei</taxon>
        <taxon>Protacanthopterygii</taxon>
        <taxon>Salmoniformes</taxon>
        <taxon>Salmonidae</taxon>
        <taxon>Salmoninae</taxon>
        <taxon>Oncorhynchus</taxon>
    </lineage>
</organism>
<feature type="signal peptide" evidence="1">
    <location>
        <begin position="1"/>
        <end position="23"/>
    </location>
</feature>
<feature type="chain" id="PRO_0000032943" description="Prolactin-2">
    <location>
        <begin position="24"/>
        <end position="210"/>
    </location>
</feature>
<feature type="disulfide bond" evidence="1">
    <location>
        <begin position="69"/>
        <end position="183"/>
    </location>
</feature>
<feature type="disulfide bond" evidence="1">
    <location>
        <begin position="200"/>
        <end position="210"/>
    </location>
</feature>
<name>PRL2_ONCTS</name>
<proteinExistence type="inferred from homology"/>
<gene>
    <name type="primary">prl2</name>
</gene>
<protein>
    <recommendedName>
        <fullName>Prolactin-2</fullName>
    </recommendedName>
    <alternativeName>
        <fullName>Prolactin II</fullName>
        <shortName>PRL-II</shortName>
    </alternativeName>
</protein>
<dbReference type="EMBL" id="S66606">
    <property type="protein sequence ID" value="AAB28216.1"/>
    <property type="molecule type" value="Genomic_DNA"/>
</dbReference>
<dbReference type="SMR" id="Q91364"/>
<dbReference type="Proteomes" id="UP000694402">
    <property type="component" value="Unassembled WGS sequence"/>
</dbReference>
<dbReference type="GO" id="GO:0005615">
    <property type="term" value="C:extracellular space"/>
    <property type="evidence" value="ECO:0007669"/>
    <property type="project" value="TreeGrafter"/>
</dbReference>
<dbReference type="GO" id="GO:0005179">
    <property type="term" value="F:hormone activity"/>
    <property type="evidence" value="ECO:0007669"/>
    <property type="project" value="UniProtKB-KW"/>
</dbReference>
<dbReference type="GO" id="GO:0005148">
    <property type="term" value="F:prolactin receptor binding"/>
    <property type="evidence" value="ECO:0000250"/>
    <property type="project" value="AgBase"/>
</dbReference>
<dbReference type="GO" id="GO:0016176">
    <property type="term" value="F:superoxide-generating NADPH oxidase activator activity"/>
    <property type="evidence" value="ECO:0000250"/>
    <property type="project" value="AgBase"/>
</dbReference>
<dbReference type="GO" id="GO:0007259">
    <property type="term" value="P:cell surface receptor signaling pathway via JAK-STAT"/>
    <property type="evidence" value="ECO:0000250"/>
    <property type="project" value="AgBase"/>
</dbReference>
<dbReference type="GO" id="GO:0010629">
    <property type="term" value="P:negative regulation of gene expression"/>
    <property type="evidence" value="ECO:0000250"/>
    <property type="project" value="AgBase"/>
</dbReference>
<dbReference type="GO" id="GO:0010628">
    <property type="term" value="P:positive regulation of gene expression"/>
    <property type="evidence" value="ECO:0000250"/>
    <property type="project" value="AgBase"/>
</dbReference>
<dbReference type="GO" id="GO:0070665">
    <property type="term" value="P:positive regulation of leukocyte proliferation"/>
    <property type="evidence" value="ECO:0000250"/>
    <property type="project" value="AgBase"/>
</dbReference>
<dbReference type="GO" id="GO:0050766">
    <property type="term" value="P:positive regulation of phagocytosis"/>
    <property type="evidence" value="ECO:0000250"/>
    <property type="project" value="AgBase"/>
</dbReference>
<dbReference type="GO" id="GO:1903428">
    <property type="term" value="P:positive regulation of reactive oxygen species biosynthetic process"/>
    <property type="evidence" value="ECO:0000250"/>
    <property type="project" value="AgBase"/>
</dbReference>
<dbReference type="GO" id="GO:0046427">
    <property type="term" value="P:positive regulation of receptor signaling pathway via JAK-STAT"/>
    <property type="evidence" value="ECO:0007669"/>
    <property type="project" value="TreeGrafter"/>
</dbReference>
<dbReference type="GO" id="GO:0060267">
    <property type="term" value="P:positive regulation of respiratory burst"/>
    <property type="evidence" value="ECO:0000250"/>
    <property type="project" value="AgBase"/>
</dbReference>
<dbReference type="GO" id="GO:0032930">
    <property type="term" value="P:positive regulation of superoxide anion generation"/>
    <property type="evidence" value="ECO:0000250"/>
    <property type="project" value="AgBase"/>
</dbReference>
<dbReference type="GO" id="GO:0002637">
    <property type="term" value="P:regulation of immunoglobulin production"/>
    <property type="evidence" value="ECO:0000250"/>
    <property type="project" value="AgBase"/>
</dbReference>
<dbReference type="GO" id="GO:0031667">
    <property type="term" value="P:response to nutrient levels"/>
    <property type="evidence" value="ECO:0007669"/>
    <property type="project" value="TreeGrafter"/>
</dbReference>
<dbReference type="FunFam" id="1.20.1250.10:FF:000037">
    <property type="entry name" value="Prolactin"/>
    <property type="match status" value="1"/>
</dbReference>
<dbReference type="Gene3D" id="1.20.1250.10">
    <property type="match status" value="1"/>
</dbReference>
<dbReference type="InterPro" id="IPR009079">
    <property type="entry name" value="4_helix_cytokine-like_core"/>
</dbReference>
<dbReference type="InterPro" id="IPR001400">
    <property type="entry name" value="Somatotropin/Prolactin"/>
</dbReference>
<dbReference type="InterPro" id="IPR018116">
    <property type="entry name" value="Somatotropin_CS"/>
</dbReference>
<dbReference type="PANTHER" id="PTHR11417:SF5">
    <property type="entry name" value="PROLACTIN"/>
    <property type="match status" value="1"/>
</dbReference>
<dbReference type="PANTHER" id="PTHR11417">
    <property type="entry name" value="SOMATOTROPIN,PROLACTIN"/>
    <property type="match status" value="1"/>
</dbReference>
<dbReference type="Pfam" id="PF00103">
    <property type="entry name" value="Hormone_1"/>
    <property type="match status" value="1"/>
</dbReference>
<dbReference type="PRINTS" id="PR00836">
    <property type="entry name" value="SOMATOTROPIN"/>
</dbReference>
<dbReference type="SUPFAM" id="SSF47266">
    <property type="entry name" value="4-helical cytokines"/>
    <property type="match status" value="1"/>
</dbReference>
<dbReference type="PROSITE" id="PS00266">
    <property type="entry name" value="SOMATOTROPIN_1"/>
    <property type="match status" value="1"/>
</dbReference>
<dbReference type="PROSITE" id="PS00338">
    <property type="entry name" value="SOMATOTROPIN_2"/>
    <property type="match status" value="1"/>
</dbReference>
<comment type="subcellular location">
    <subcellularLocation>
        <location>Secreted</location>
    </subcellularLocation>
</comment>
<comment type="similarity">
    <text evidence="2">Belongs to the somatotropin/prolactin family.</text>
</comment>
<accession>Q91364</accession>
<reference key="1">
    <citation type="journal article" date="1992" name="Mol. Mar. Biol. Biotechnol.">
        <title>A gene encoding chinook salmon (Oncorhynchus tschawytscha) prolactin: gene structure and potential cis-acting regulatory elements.</title>
        <authorList>
            <person name="Xiong F."/>
            <person name="Chin R.A."/>
            <person name="Hew C.-L."/>
        </authorList>
    </citation>
    <scope>NUCLEOTIDE SEQUENCE [GENOMIC DNA]</scope>
</reference>